<name>RTC5_YEAS8</name>
<accession>C8ZI80</accession>
<sequence>MGQSSSISSSNEEGSSHSKKFTNSKDILAYFNNKAQQQVTIPELVSFKGNLQIEDLNTPISHKALCNSLYFPQNHAMIVGIVTNMLRVLSNFPLMKSSYEPITGYGLLKCILLLNRARCAKFLKTKSYDQLKLLFISLSLQKTDKEELSEESENDGNKELTIKQIITGFDDVDTEMLCIPADFMLQFLTWLLILTVDCPTTNSKLDNTETHDQWGNFKVSALNLLRTMNPDVVGDIESHSITFQQFSTAIRTVMPNLLKPLENLMEHFFYLQHDLVDHDTNLSSIQDSKVMTPALLAQLSTGLPKELFIHKLQSLYIGRKSGFSMRSLQAKVFKWMAPSILVVSGMRITNSEEYAAEKNPRYRHFLEEFPKLKESDQMMDASHLNKRKTTFAVYIDDPWKVTNKDYFGDLNTRIIEISPRQDIYKVNQKGTIYFNTIGGGIGIGDKQPLIKPASKRYIPGNVSLTFDSTLEFAVFRNTGYGGSLDPGLLSMERKEENSPYELHFLIQDVEVWGCGGEKELEEQIKQLEWEEAESKRRQQINLRSLGEDRALLEMAGLVGQHQGGGSM</sequence>
<gene>
    <name type="primary">RTC5</name>
    <name type="ORF">EC1118_1O4_3279g</name>
</gene>
<keyword id="KW-0963">Cytoplasm</keyword>
<organism>
    <name type="scientific">Saccharomyces cerevisiae (strain Lalvin EC1118 / Prise de mousse)</name>
    <name type="common">Baker's yeast</name>
    <dbReference type="NCBI Taxonomy" id="643680"/>
    <lineage>
        <taxon>Eukaryota</taxon>
        <taxon>Fungi</taxon>
        <taxon>Dikarya</taxon>
        <taxon>Ascomycota</taxon>
        <taxon>Saccharomycotina</taxon>
        <taxon>Saccharomycetes</taxon>
        <taxon>Saccharomycetales</taxon>
        <taxon>Saccharomycetaceae</taxon>
        <taxon>Saccharomyces</taxon>
    </lineage>
</organism>
<reference key="1">
    <citation type="journal article" date="2009" name="Proc. Natl. Acad. Sci. U.S.A.">
        <title>Eukaryote-to-eukaryote gene transfer events revealed by the genome sequence of the wine yeast Saccharomyces cerevisiae EC1118.</title>
        <authorList>
            <person name="Novo M."/>
            <person name="Bigey F."/>
            <person name="Beyne E."/>
            <person name="Galeote V."/>
            <person name="Gavory F."/>
            <person name="Mallet S."/>
            <person name="Cambon B."/>
            <person name="Legras J.-L."/>
            <person name="Wincker P."/>
            <person name="Casaregola S."/>
            <person name="Dequin S."/>
        </authorList>
    </citation>
    <scope>NUCLEOTIDE SEQUENCE [LARGE SCALE GENOMIC DNA]</scope>
    <source>
        <strain>Lalvin EC1118 / Prise de mousse</strain>
    </source>
</reference>
<feature type="chain" id="PRO_0000408854" description="Restriction of telomere capping protein 5">
    <location>
        <begin position="1"/>
        <end position="567"/>
    </location>
</feature>
<feature type="domain" description="TLDc" evidence="2">
    <location>
        <begin position="289"/>
        <end position="515"/>
    </location>
</feature>
<evidence type="ECO:0000250" key="1"/>
<evidence type="ECO:0000255" key="2">
    <source>
        <dbReference type="PROSITE-ProRule" id="PRU01234"/>
    </source>
</evidence>
<evidence type="ECO:0000305" key="3"/>
<comment type="function">
    <text evidence="1">May be involved in a process influencing telomere capping.</text>
</comment>
<comment type="subcellular location">
    <subcellularLocation>
        <location evidence="1">Cytoplasm</location>
    </subcellularLocation>
</comment>
<comment type="similarity">
    <text evidence="3">Belongs to the RTC5 family.</text>
</comment>
<proteinExistence type="inferred from homology"/>
<dbReference type="EMBL" id="FN394216">
    <property type="protein sequence ID" value="CAY86405.1"/>
    <property type="molecule type" value="Genomic_DNA"/>
</dbReference>
<dbReference type="SMR" id="C8ZI80"/>
<dbReference type="HOGENOM" id="CLU_011918_1_0_1"/>
<dbReference type="OrthoDB" id="32658at4893"/>
<dbReference type="Proteomes" id="UP000000286">
    <property type="component" value="Chromosome XV, Scaffold EC1118_1O4"/>
</dbReference>
<dbReference type="GO" id="GO:0005737">
    <property type="term" value="C:cytoplasm"/>
    <property type="evidence" value="ECO:0007669"/>
    <property type="project" value="UniProtKB-SubCell"/>
</dbReference>
<dbReference type="GO" id="GO:0005634">
    <property type="term" value="C:nucleus"/>
    <property type="evidence" value="ECO:0007669"/>
    <property type="project" value="TreeGrafter"/>
</dbReference>
<dbReference type="GO" id="GO:0006979">
    <property type="term" value="P:response to oxidative stress"/>
    <property type="evidence" value="ECO:0007669"/>
    <property type="project" value="TreeGrafter"/>
</dbReference>
<dbReference type="InterPro" id="IPR006571">
    <property type="entry name" value="TLDc_dom"/>
</dbReference>
<dbReference type="PANTHER" id="PTHR23354">
    <property type="entry name" value="NUCLEOLAR PROTEIN 7/ESTROGEN RECEPTOR COACTIVATOR-RELATED"/>
    <property type="match status" value="1"/>
</dbReference>
<dbReference type="PANTHER" id="PTHR23354:SF130">
    <property type="entry name" value="RESTRICTION OF TELOMERE CAPPING PROTEIN 5"/>
    <property type="match status" value="1"/>
</dbReference>
<dbReference type="Pfam" id="PF07534">
    <property type="entry name" value="TLD"/>
    <property type="match status" value="1"/>
</dbReference>
<dbReference type="SMART" id="SM00584">
    <property type="entry name" value="TLDc"/>
    <property type="match status" value="1"/>
</dbReference>
<dbReference type="PROSITE" id="PS51886">
    <property type="entry name" value="TLDC"/>
    <property type="match status" value="1"/>
</dbReference>
<protein>
    <recommendedName>
        <fullName>Restriction of telomere capping protein 5</fullName>
    </recommendedName>
</protein>